<feature type="signal peptide" evidence="1">
    <location>
        <begin position="1"/>
        <end position="26"/>
    </location>
</feature>
<feature type="chain" id="PRO_0000049856" description="Uncharacterized protein YraI">
    <location>
        <begin position="27"/>
        <end position="119"/>
    </location>
</feature>
<feature type="domain" description="SH3b" evidence="2">
    <location>
        <begin position="30"/>
        <end position="104"/>
    </location>
</feature>
<name>YRAI_BACSU</name>
<protein>
    <recommendedName>
        <fullName>Uncharacterized protein YraI</fullName>
    </recommendedName>
</protein>
<reference key="1">
    <citation type="journal article" date="1997" name="Microbiology">
        <title>A 23911 bp region of the Bacillus subtilis genome comprising genes located upstream and downstream of the lev operon.</title>
        <authorList>
            <person name="Parro V."/>
            <person name="San Roman M."/>
            <person name="Galindo I."/>
            <person name="Purnelle B."/>
            <person name="Bolotin A."/>
            <person name="Sorokin A."/>
            <person name="Mellado R.P."/>
        </authorList>
    </citation>
    <scope>NUCLEOTIDE SEQUENCE [GENOMIC DNA]</scope>
    <source>
        <strain>168</strain>
    </source>
</reference>
<reference key="2">
    <citation type="journal article" date="1997" name="Microbiology">
        <title>Sequence of the Bacillus subtilis genome region in the vicinity of the lev operon reveals two new extracytoplasmic function RNA polymerase sigma factors SigV and SigZ.</title>
        <authorList>
            <person name="Sorokin A."/>
            <person name="Bolotin A."/>
            <person name="Purnelle B."/>
            <person name="Hilbert H."/>
            <person name="Lauber J."/>
            <person name="Duesterhoeft A."/>
            <person name="Ehrlich S.D."/>
        </authorList>
    </citation>
    <scope>NUCLEOTIDE SEQUENCE [GENOMIC DNA]</scope>
    <source>
        <strain>168</strain>
    </source>
</reference>
<reference key="3">
    <citation type="journal article" date="1997" name="Nature">
        <title>The complete genome sequence of the Gram-positive bacterium Bacillus subtilis.</title>
        <authorList>
            <person name="Kunst F."/>
            <person name="Ogasawara N."/>
            <person name="Moszer I."/>
            <person name="Albertini A.M."/>
            <person name="Alloni G."/>
            <person name="Azevedo V."/>
            <person name="Bertero M.G."/>
            <person name="Bessieres P."/>
            <person name="Bolotin A."/>
            <person name="Borchert S."/>
            <person name="Borriss R."/>
            <person name="Boursier L."/>
            <person name="Brans A."/>
            <person name="Braun M."/>
            <person name="Brignell S.C."/>
            <person name="Bron S."/>
            <person name="Brouillet S."/>
            <person name="Bruschi C.V."/>
            <person name="Caldwell B."/>
            <person name="Capuano V."/>
            <person name="Carter N.M."/>
            <person name="Choi S.-K."/>
            <person name="Codani J.-J."/>
            <person name="Connerton I.F."/>
            <person name="Cummings N.J."/>
            <person name="Daniel R.A."/>
            <person name="Denizot F."/>
            <person name="Devine K.M."/>
            <person name="Duesterhoeft A."/>
            <person name="Ehrlich S.D."/>
            <person name="Emmerson P.T."/>
            <person name="Entian K.-D."/>
            <person name="Errington J."/>
            <person name="Fabret C."/>
            <person name="Ferrari E."/>
            <person name="Foulger D."/>
            <person name="Fritz C."/>
            <person name="Fujita M."/>
            <person name="Fujita Y."/>
            <person name="Fuma S."/>
            <person name="Galizzi A."/>
            <person name="Galleron N."/>
            <person name="Ghim S.-Y."/>
            <person name="Glaser P."/>
            <person name="Goffeau A."/>
            <person name="Golightly E.J."/>
            <person name="Grandi G."/>
            <person name="Guiseppi G."/>
            <person name="Guy B.J."/>
            <person name="Haga K."/>
            <person name="Haiech J."/>
            <person name="Harwood C.R."/>
            <person name="Henaut A."/>
            <person name="Hilbert H."/>
            <person name="Holsappel S."/>
            <person name="Hosono S."/>
            <person name="Hullo M.-F."/>
            <person name="Itaya M."/>
            <person name="Jones L.-M."/>
            <person name="Joris B."/>
            <person name="Karamata D."/>
            <person name="Kasahara Y."/>
            <person name="Klaerr-Blanchard M."/>
            <person name="Klein C."/>
            <person name="Kobayashi Y."/>
            <person name="Koetter P."/>
            <person name="Koningstein G."/>
            <person name="Krogh S."/>
            <person name="Kumano M."/>
            <person name="Kurita K."/>
            <person name="Lapidus A."/>
            <person name="Lardinois S."/>
            <person name="Lauber J."/>
            <person name="Lazarevic V."/>
            <person name="Lee S.-M."/>
            <person name="Levine A."/>
            <person name="Liu H."/>
            <person name="Masuda S."/>
            <person name="Mauel C."/>
            <person name="Medigue C."/>
            <person name="Medina N."/>
            <person name="Mellado R.P."/>
            <person name="Mizuno M."/>
            <person name="Moestl D."/>
            <person name="Nakai S."/>
            <person name="Noback M."/>
            <person name="Noone D."/>
            <person name="O'Reilly M."/>
            <person name="Ogawa K."/>
            <person name="Ogiwara A."/>
            <person name="Oudega B."/>
            <person name="Park S.-H."/>
            <person name="Parro V."/>
            <person name="Pohl T.M."/>
            <person name="Portetelle D."/>
            <person name="Porwollik S."/>
            <person name="Prescott A.M."/>
            <person name="Presecan E."/>
            <person name="Pujic P."/>
            <person name="Purnelle B."/>
            <person name="Rapoport G."/>
            <person name="Rey M."/>
            <person name="Reynolds S."/>
            <person name="Rieger M."/>
            <person name="Rivolta C."/>
            <person name="Rocha E."/>
            <person name="Roche B."/>
            <person name="Rose M."/>
            <person name="Sadaie Y."/>
            <person name="Sato T."/>
            <person name="Scanlan E."/>
            <person name="Schleich S."/>
            <person name="Schroeter R."/>
            <person name="Scoffone F."/>
            <person name="Sekiguchi J."/>
            <person name="Sekowska A."/>
            <person name="Seror S.J."/>
            <person name="Serror P."/>
            <person name="Shin B.-S."/>
            <person name="Soldo B."/>
            <person name="Sorokin A."/>
            <person name="Tacconi E."/>
            <person name="Takagi T."/>
            <person name="Takahashi H."/>
            <person name="Takemaru K."/>
            <person name="Takeuchi M."/>
            <person name="Tamakoshi A."/>
            <person name="Tanaka T."/>
            <person name="Terpstra P."/>
            <person name="Tognoni A."/>
            <person name="Tosato V."/>
            <person name="Uchiyama S."/>
            <person name="Vandenbol M."/>
            <person name="Vannier F."/>
            <person name="Vassarotti A."/>
            <person name="Viari A."/>
            <person name="Wambutt R."/>
            <person name="Wedler E."/>
            <person name="Wedler H."/>
            <person name="Weitzenegger T."/>
            <person name="Winters P."/>
            <person name="Wipat A."/>
            <person name="Yamamoto H."/>
            <person name="Yamane K."/>
            <person name="Yasumoto K."/>
            <person name="Yata K."/>
            <person name="Yoshida K."/>
            <person name="Yoshikawa H.-F."/>
            <person name="Zumstein E."/>
            <person name="Yoshikawa H."/>
            <person name="Danchin A."/>
        </authorList>
    </citation>
    <scope>NUCLEOTIDE SEQUENCE [LARGE SCALE GENOMIC DNA]</scope>
    <source>
        <strain>168</strain>
    </source>
</reference>
<proteinExistence type="inferred from homology"/>
<keyword id="KW-1185">Reference proteome</keyword>
<keyword id="KW-0732">Signal</keyword>
<sequence length="119" mass="12839">MNKLKRLSMLTVMIASVFIFSSHALAAQYYTVSTSSGAPVNMRSGPGTSWGIVTTIPSGTRIPIYCYKTGTTVTGKYGTSNIWNYTERTLASGEIVPGFVSDTYMYTGSDGPVVPKCSW</sequence>
<gene>
    <name type="primary">yraI</name>
    <name type="ordered locus">BSU26930</name>
</gene>
<comment type="similarity">
    <text evidence="3">To B.subtilis YraJ.</text>
</comment>
<comment type="sequence caution" evidence="3">
    <conflict type="erroneous initiation">
        <sequence resource="EMBL-CDS" id="AAB80878"/>
    </conflict>
    <text>Extended N-terminus.</text>
</comment>
<comment type="sequence caution" evidence="3">
    <conflict type="erroneous initiation">
        <sequence resource="EMBL-CDS" id="CAA63451"/>
    </conflict>
    <text>Extended N-terminus.</text>
</comment>
<organism>
    <name type="scientific">Bacillus subtilis (strain 168)</name>
    <dbReference type="NCBI Taxonomy" id="224308"/>
    <lineage>
        <taxon>Bacteria</taxon>
        <taxon>Bacillati</taxon>
        <taxon>Bacillota</taxon>
        <taxon>Bacilli</taxon>
        <taxon>Bacillales</taxon>
        <taxon>Bacillaceae</taxon>
        <taxon>Bacillus</taxon>
    </lineage>
</organism>
<evidence type="ECO:0000255" key="1"/>
<evidence type="ECO:0000255" key="2">
    <source>
        <dbReference type="PROSITE-ProRule" id="PRU01117"/>
    </source>
</evidence>
<evidence type="ECO:0000305" key="3"/>
<dbReference type="EMBL" id="X92868">
    <property type="protein sequence ID" value="CAA63451.1"/>
    <property type="status" value="ALT_INIT"/>
    <property type="molecule type" value="Genomic_DNA"/>
</dbReference>
<dbReference type="EMBL" id="U93875">
    <property type="protein sequence ID" value="AAB80878.1"/>
    <property type="status" value="ALT_INIT"/>
    <property type="molecule type" value="Genomic_DNA"/>
</dbReference>
<dbReference type="EMBL" id="AL009126">
    <property type="protein sequence ID" value="CAB14634.2"/>
    <property type="molecule type" value="Genomic_DNA"/>
</dbReference>
<dbReference type="PIR" id="A69971">
    <property type="entry name" value="A69971"/>
</dbReference>
<dbReference type="RefSeq" id="NP_390570.2">
    <property type="nucleotide sequence ID" value="NC_000964.3"/>
</dbReference>
<dbReference type="RefSeq" id="WP_004399021.1">
    <property type="nucleotide sequence ID" value="NZ_OZ025638.1"/>
</dbReference>
<dbReference type="SMR" id="O07909"/>
<dbReference type="FunCoup" id="O07909">
    <property type="interactions" value="22"/>
</dbReference>
<dbReference type="STRING" id="224308.BSU26930"/>
<dbReference type="PaxDb" id="224308-BSU26930"/>
<dbReference type="EnsemblBacteria" id="CAB14634">
    <property type="protein sequence ID" value="CAB14634"/>
    <property type="gene ID" value="BSU_26930"/>
</dbReference>
<dbReference type="GeneID" id="936030"/>
<dbReference type="KEGG" id="bsu:BSU26930"/>
<dbReference type="PATRIC" id="fig|224308.43.peg.2808"/>
<dbReference type="eggNOG" id="COG4991">
    <property type="taxonomic scope" value="Bacteria"/>
</dbReference>
<dbReference type="InParanoid" id="O07909"/>
<dbReference type="OrthoDB" id="9805070at2"/>
<dbReference type="BioCyc" id="BSUB:BSU26930-MONOMER"/>
<dbReference type="Proteomes" id="UP000001570">
    <property type="component" value="Chromosome"/>
</dbReference>
<dbReference type="Gene3D" id="2.30.30.40">
    <property type="entry name" value="SH3 Domains"/>
    <property type="match status" value="1"/>
</dbReference>
<dbReference type="InterPro" id="IPR003646">
    <property type="entry name" value="SH3-like_bac-type"/>
</dbReference>
<dbReference type="PROSITE" id="PS51781">
    <property type="entry name" value="SH3B"/>
    <property type="match status" value="1"/>
</dbReference>
<accession>O07909</accession>